<protein>
    <recommendedName>
        <fullName evidence="1">Leucyl/phenylalanyl-tRNA--protein transferase</fullName>
        <ecNumber evidence="1">2.3.2.6</ecNumber>
    </recommendedName>
    <alternativeName>
        <fullName evidence="1">L/F-transferase</fullName>
    </alternativeName>
    <alternativeName>
        <fullName evidence="1">Leucyltransferase</fullName>
    </alternativeName>
    <alternativeName>
        <fullName evidence="1">Phenyalanyltransferase</fullName>
    </alternativeName>
</protein>
<reference key="1">
    <citation type="submission" date="2008-06" db="EMBL/GenBank/DDBJ databases">
        <title>Complete sequence of Pelodictyon phaeoclathratiforme BU-1.</title>
        <authorList>
            <consortium name="US DOE Joint Genome Institute"/>
            <person name="Lucas S."/>
            <person name="Copeland A."/>
            <person name="Lapidus A."/>
            <person name="Glavina del Rio T."/>
            <person name="Dalin E."/>
            <person name="Tice H."/>
            <person name="Bruce D."/>
            <person name="Goodwin L."/>
            <person name="Pitluck S."/>
            <person name="Schmutz J."/>
            <person name="Larimer F."/>
            <person name="Land M."/>
            <person name="Hauser L."/>
            <person name="Kyrpides N."/>
            <person name="Mikhailova N."/>
            <person name="Liu Z."/>
            <person name="Li T."/>
            <person name="Zhao F."/>
            <person name="Overmann J."/>
            <person name="Bryant D.A."/>
            <person name="Richardson P."/>
        </authorList>
    </citation>
    <scope>NUCLEOTIDE SEQUENCE [LARGE SCALE GENOMIC DNA]</scope>
    <source>
        <strain>DSM 5477 / BU-1</strain>
    </source>
</reference>
<proteinExistence type="inferred from homology"/>
<dbReference type="EC" id="2.3.2.6" evidence="1"/>
<dbReference type="EMBL" id="CP001110">
    <property type="protein sequence ID" value="ACF44413.1"/>
    <property type="molecule type" value="Genomic_DNA"/>
</dbReference>
<dbReference type="RefSeq" id="WP_012508889.1">
    <property type="nucleotide sequence ID" value="NC_011060.1"/>
</dbReference>
<dbReference type="SMR" id="B4SDP5"/>
<dbReference type="STRING" id="324925.Ppha_2216"/>
<dbReference type="KEGG" id="pph:Ppha_2216"/>
<dbReference type="eggNOG" id="COG2360">
    <property type="taxonomic scope" value="Bacteria"/>
</dbReference>
<dbReference type="HOGENOM" id="CLU_075045_1_1_10"/>
<dbReference type="OrthoDB" id="9790282at2"/>
<dbReference type="Proteomes" id="UP000002724">
    <property type="component" value="Chromosome"/>
</dbReference>
<dbReference type="GO" id="GO:0005737">
    <property type="term" value="C:cytoplasm"/>
    <property type="evidence" value="ECO:0007669"/>
    <property type="project" value="UniProtKB-SubCell"/>
</dbReference>
<dbReference type="GO" id="GO:0008914">
    <property type="term" value="F:leucyl-tRNA--protein transferase activity"/>
    <property type="evidence" value="ECO:0007669"/>
    <property type="project" value="UniProtKB-UniRule"/>
</dbReference>
<dbReference type="GO" id="GO:0030163">
    <property type="term" value="P:protein catabolic process"/>
    <property type="evidence" value="ECO:0007669"/>
    <property type="project" value="UniProtKB-UniRule"/>
</dbReference>
<dbReference type="FunFam" id="3.40.630.70:FF:000001">
    <property type="entry name" value="Leucyl/phenylalanyl-tRNA--protein transferase"/>
    <property type="match status" value="1"/>
</dbReference>
<dbReference type="Gene3D" id="3.40.630.70">
    <property type="entry name" value="Leucyl/phenylalanyl-tRNA-protein transferase, C-terminal domain"/>
    <property type="match status" value="1"/>
</dbReference>
<dbReference type="HAMAP" id="MF_00688">
    <property type="entry name" value="Leu_Phe_trans"/>
    <property type="match status" value="1"/>
</dbReference>
<dbReference type="InterPro" id="IPR016181">
    <property type="entry name" value="Acyl_CoA_acyltransferase"/>
</dbReference>
<dbReference type="InterPro" id="IPR004616">
    <property type="entry name" value="Leu/Phe-tRNA_Trfase"/>
</dbReference>
<dbReference type="InterPro" id="IPR042203">
    <property type="entry name" value="Leu/Phe-tRNA_Trfase_C"/>
</dbReference>
<dbReference type="NCBIfam" id="TIGR00667">
    <property type="entry name" value="aat"/>
    <property type="match status" value="1"/>
</dbReference>
<dbReference type="PANTHER" id="PTHR30098">
    <property type="entry name" value="LEUCYL/PHENYLALANYL-TRNA--PROTEIN TRANSFERASE"/>
    <property type="match status" value="1"/>
</dbReference>
<dbReference type="PANTHER" id="PTHR30098:SF2">
    <property type="entry name" value="LEUCYL_PHENYLALANYL-TRNA--PROTEIN TRANSFERASE"/>
    <property type="match status" value="1"/>
</dbReference>
<dbReference type="Pfam" id="PF03588">
    <property type="entry name" value="Leu_Phe_trans"/>
    <property type="match status" value="1"/>
</dbReference>
<dbReference type="SUPFAM" id="SSF55729">
    <property type="entry name" value="Acyl-CoA N-acyltransferases (Nat)"/>
    <property type="match status" value="1"/>
</dbReference>
<comment type="function">
    <text evidence="1">Functions in the N-end rule pathway of protein degradation where it conjugates Leu, Phe and, less efficiently, Met from aminoacyl-tRNAs to the N-termini of proteins containing an N-terminal arginine or lysine.</text>
</comment>
<comment type="catalytic activity">
    <reaction evidence="1">
        <text>N-terminal L-lysyl-[protein] + L-leucyl-tRNA(Leu) = N-terminal L-leucyl-L-lysyl-[protein] + tRNA(Leu) + H(+)</text>
        <dbReference type="Rhea" id="RHEA:12340"/>
        <dbReference type="Rhea" id="RHEA-COMP:9613"/>
        <dbReference type="Rhea" id="RHEA-COMP:9622"/>
        <dbReference type="Rhea" id="RHEA-COMP:12670"/>
        <dbReference type="Rhea" id="RHEA-COMP:12671"/>
        <dbReference type="ChEBI" id="CHEBI:15378"/>
        <dbReference type="ChEBI" id="CHEBI:65249"/>
        <dbReference type="ChEBI" id="CHEBI:78442"/>
        <dbReference type="ChEBI" id="CHEBI:78494"/>
        <dbReference type="ChEBI" id="CHEBI:133043"/>
        <dbReference type="EC" id="2.3.2.6"/>
    </reaction>
</comment>
<comment type="catalytic activity">
    <reaction evidence="1">
        <text>N-terminal L-arginyl-[protein] + L-leucyl-tRNA(Leu) = N-terminal L-leucyl-L-arginyl-[protein] + tRNA(Leu) + H(+)</text>
        <dbReference type="Rhea" id="RHEA:50416"/>
        <dbReference type="Rhea" id="RHEA-COMP:9613"/>
        <dbReference type="Rhea" id="RHEA-COMP:9622"/>
        <dbReference type="Rhea" id="RHEA-COMP:12672"/>
        <dbReference type="Rhea" id="RHEA-COMP:12673"/>
        <dbReference type="ChEBI" id="CHEBI:15378"/>
        <dbReference type="ChEBI" id="CHEBI:64719"/>
        <dbReference type="ChEBI" id="CHEBI:78442"/>
        <dbReference type="ChEBI" id="CHEBI:78494"/>
        <dbReference type="ChEBI" id="CHEBI:133044"/>
        <dbReference type="EC" id="2.3.2.6"/>
    </reaction>
</comment>
<comment type="catalytic activity">
    <reaction evidence="1">
        <text>L-phenylalanyl-tRNA(Phe) + an N-terminal L-alpha-aminoacyl-[protein] = an N-terminal L-phenylalanyl-L-alpha-aminoacyl-[protein] + tRNA(Phe)</text>
        <dbReference type="Rhea" id="RHEA:43632"/>
        <dbReference type="Rhea" id="RHEA-COMP:9668"/>
        <dbReference type="Rhea" id="RHEA-COMP:9699"/>
        <dbReference type="Rhea" id="RHEA-COMP:10636"/>
        <dbReference type="Rhea" id="RHEA-COMP:10637"/>
        <dbReference type="ChEBI" id="CHEBI:78442"/>
        <dbReference type="ChEBI" id="CHEBI:78531"/>
        <dbReference type="ChEBI" id="CHEBI:78597"/>
        <dbReference type="ChEBI" id="CHEBI:83561"/>
        <dbReference type="EC" id="2.3.2.6"/>
    </reaction>
</comment>
<comment type="subcellular location">
    <subcellularLocation>
        <location evidence="1">Cytoplasm</location>
    </subcellularLocation>
</comment>
<comment type="similarity">
    <text evidence="1">Belongs to the L/F-transferase family.</text>
</comment>
<gene>
    <name evidence="1" type="primary">aat</name>
    <name type="ordered locus">Ppha_2216</name>
</gene>
<evidence type="ECO:0000255" key="1">
    <source>
        <dbReference type="HAMAP-Rule" id="MF_00688"/>
    </source>
</evidence>
<name>LFTR_PELPB</name>
<accession>B4SDP5</accession>
<feature type="chain" id="PRO_1000131934" description="Leucyl/phenylalanyl-tRNA--protein transferase">
    <location>
        <begin position="1"/>
        <end position="194"/>
    </location>
</feature>
<organism>
    <name type="scientific">Pelodictyon phaeoclathratiforme (strain DSM 5477 / BU-1)</name>
    <dbReference type="NCBI Taxonomy" id="324925"/>
    <lineage>
        <taxon>Bacteria</taxon>
        <taxon>Pseudomonadati</taxon>
        <taxon>Chlorobiota</taxon>
        <taxon>Chlorobiia</taxon>
        <taxon>Chlorobiales</taxon>
        <taxon>Chlorobiaceae</taxon>
        <taxon>Chlorobium/Pelodictyon group</taxon>
        <taxon>Pelodictyon</taxon>
    </lineage>
</organism>
<sequence>MIRIDELLRAYRRGYFPMSDPEDEKVYWCQPYKRAVFCLDSYRPSRDVLRLTRKKEFTVTLDKEFAGVIKGCAAPRKNDHETWISDEIIEAYTKLHSLGIAHSFESWYQGELVGGLYGIALGGAFFGESMFSRRSYASRIAFDHLVFHLREKGYLLLDAQIMNPHLQRLGAVEIEHEEYMRQLAHALQKKIVFL</sequence>
<keyword id="KW-0012">Acyltransferase</keyword>
<keyword id="KW-0963">Cytoplasm</keyword>
<keyword id="KW-1185">Reference proteome</keyword>
<keyword id="KW-0808">Transferase</keyword>